<gene>
    <name evidence="1" type="primary">petB</name>
</gene>
<sequence>MSKVYDWFDERLEIQAIADDISSKYVPPHVNIFYCLGGITFTCFLVQVATGFAMTFYYRPTVVEAFASVQYIMTEVNFGWLIRSIHRWSASMMVLMMILHVFRVWLTGGFKKPRELTWTTGVIMAVCTVSFGVTGYSLPWDQVGYWAVKIVTGVPDAIPVVGPTIVELLRGGVGVGQATLTRFYSLHTFVLPLLTAVFMLMHFLMIRKQGISGPL</sequence>
<geneLocation type="chloroplast"/>
<proteinExistence type="inferred from homology"/>
<accession>Q06SE1</accession>
<feature type="chain" id="PRO_0000275339" description="Cytochrome b6">
    <location>
        <begin position="1"/>
        <end position="215"/>
    </location>
</feature>
<feature type="transmembrane region" description="Helical" evidence="1">
    <location>
        <begin position="32"/>
        <end position="52"/>
    </location>
</feature>
<feature type="transmembrane region" description="Helical" evidence="1">
    <location>
        <begin position="90"/>
        <end position="110"/>
    </location>
</feature>
<feature type="transmembrane region" description="Helical" evidence="1">
    <location>
        <begin position="116"/>
        <end position="136"/>
    </location>
</feature>
<feature type="transmembrane region" description="Helical" evidence="1">
    <location>
        <begin position="186"/>
        <end position="206"/>
    </location>
</feature>
<feature type="binding site" description="covalent" evidence="1">
    <location>
        <position position="35"/>
    </location>
    <ligand>
        <name>heme c</name>
        <dbReference type="ChEBI" id="CHEBI:61717"/>
    </ligand>
</feature>
<feature type="binding site" description="axial binding residue" evidence="1">
    <location>
        <position position="86"/>
    </location>
    <ligand>
        <name>heme b</name>
        <dbReference type="ChEBI" id="CHEBI:60344"/>
        <label>2</label>
    </ligand>
    <ligandPart>
        <name>Fe</name>
        <dbReference type="ChEBI" id="CHEBI:18248"/>
    </ligandPart>
</feature>
<feature type="binding site" description="axial binding residue" evidence="1">
    <location>
        <position position="100"/>
    </location>
    <ligand>
        <name>heme b</name>
        <dbReference type="ChEBI" id="CHEBI:60344"/>
        <label>1</label>
    </ligand>
    <ligandPart>
        <name>Fe</name>
        <dbReference type="ChEBI" id="CHEBI:18248"/>
    </ligandPart>
</feature>
<feature type="binding site" description="axial binding residue" evidence="1">
    <location>
        <position position="187"/>
    </location>
    <ligand>
        <name>heme b</name>
        <dbReference type="ChEBI" id="CHEBI:60344"/>
        <label>2</label>
    </ligand>
    <ligandPart>
        <name>Fe</name>
        <dbReference type="ChEBI" id="CHEBI:18248"/>
    </ligandPart>
</feature>
<feature type="binding site" description="axial binding residue" evidence="1">
    <location>
        <position position="202"/>
    </location>
    <ligand>
        <name>heme b</name>
        <dbReference type="ChEBI" id="CHEBI:60344"/>
        <label>1</label>
    </ligand>
    <ligandPart>
        <name>Fe</name>
        <dbReference type="ChEBI" id="CHEBI:18248"/>
    </ligandPart>
</feature>
<organism>
    <name type="scientific">Stigeoclonium helveticum</name>
    <name type="common">Green alga</name>
    <dbReference type="NCBI Taxonomy" id="55999"/>
    <lineage>
        <taxon>Eukaryota</taxon>
        <taxon>Viridiplantae</taxon>
        <taxon>Chlorophyta</taxon>
        <taxon>core chlorophytes</taxon>
        <taxon>Chlorophyceae</taxon>
        <taxon>OCC clade</taxon>
        <taxon>Chaetophorales</taxon>
        <taxon>Chaetophoraceae</taxon>
        <taxon>Stigeoclonium</taxon>
    </lineage>
</organism>
<keyword id="KW-0150">Chloroplast</keyword>
<keyword id="KW-0249">Electron transport</keyword>
<keyword id="KW-0349">Heme</keyword>
<keyword id="KW-0408">Iron</keyword>
<keyword id="KW-0472">Membrane</keyword>
<keyword id="KW-0479">Metal-binding</keyword>
<keyword id="KW-0602">Photosynthesis</keyword>
<keyword id="KW-0934">Plastid</keyword>
<keyword id="KW-0793">Thylakoid</keyword>
<keyword id="KW-0812">Transmembrane</keyword>
<keyword id="KW-1133">Transmembrane helix</keyword>
<keyword id="KW-0813">Transport</keyword>
<reference key="1">
    <citation type="journal article" date="2006" name="Mol. Genet. Genomics">
        <title>Distinctive architecture of the chloroplast genome in the chlorophycean green alga Stigeoclonium helveticum.</title>
        <authorList>
            <person name="Belanger A.-S."/>
            <person name="Brouard J.-S."/>
            <person name="Charlebois P."/>
            <person name="Otis C."/>
            <person name="Lemieux C."/>
            <person name="Turmel M."/>
        </authorList>
    </citation>
    <scope>NUCLEOTIDE SEQUENCE [LARGE SCALE GENOMIC DNA]</scope>
    <source>
        <strain>UTEX 441</strain>
    </source>
</reference>
<name>CYB6_STIHE</name>
<evidence type="ECO:0000255" key="1">
    <source>
        <dbReference type="HAMAP-Rule" id="MF_00633"/>
    </source>
</evidence>
<dbReference type="EMBL" id="DQ630521">
    <property type="protein sequence ID" value="ABF60159.1"/>
    <property type="molecule type" value="Genomic_DNA"/>
</dbReference>
<dbReference type="RefSeq" id="YP_764425.1">
    <property type="nucleotide sequence ID" value="NC_008372.1"/>
</dbReference>
<dbReference type="SMR" id="Q06SE1"/>
<dbReference type="GeneID" id="4308402"/>
<dbReference type="GO" id="GO:0009535">
    <property type="term" value="C:chloroplast thylakoid membrane"/>
    <property type="evidence" value="ECO:0007669"/>
    <property type="project" value="UniProtKB-SubCell"/>
</dbReference>
<dbReference type="GO" id="GO:0045158">
    <property type="term" value="F:electron transporter, transferring electrons within cytochrome b6/f complex of photosystem II activity"/>
    <property type="evidence" value="ECO:0007669"/>
    <property type="project" value="UniProtKB-UniRule"/>
</dbReference>
<dbReference type="GO" id="GO:0046872">
    <property type="term" value="F:metal ion binding"/>
    <property type="evidence" value="ECO:0007669"/>
    <property type="project" value="UniProtKB-KW"/>
</dbReference>
<dbReference type="GO" id="GO:0016491">
    <property type="term" value="F:oxidoreductase activity"/>
    <property type="evidence" value="ECO:0007669"/>
    <property type="project" value="InterPro"/>
</dbReference>
<dbReference type="GO" id="GO:0015979">
    <property type="term" value="P:photosynthesis"/>
    <property type="evidence" value="ECO:0007669"/>
    <property type="project" value="UniProtKB-UniRule"/>
</dbReference>
<dbReference type="GO" id="GO:0022904">
    <property type="term" value="P:respiratory electron transport chain"/>
    <property type="evidence" value="ECO:0007669"/>
    <property type="project" value="InterPro"/>
</dbReference>
<dbReference type="CDD" id="cd00284">
    <property type="entry name" value="Cytochrome_b_N"/>
    <property type="match status" value="1"/>
</dbReference>
<dbReference type="FunFam" id="1.20.810.10:FF:000001">
    <property type="entry name" value="Cytochrome b6"/>
    <property type="match status" value="1"/>
</dbReference>
<dbReference type="Gene3D" id="1.20.810.10">
    <property type="entry name" value="Cytochrome Bc1 Complex, Chain C"/>
    <property type="match status" value="1"/>
</dbReference>
<dbReference type="HAMAP" id="MF_00633">
    <property type="entry name" value="Cytb6_f_cytb6"/>
    <property type="match status" value="1"/>
</dbReference>
<dbReference type="InterPro" id="IPR005797">
    <property type="entry name" value="Cyt_b/b6_N"/>
</dbReference>
<dbReference type="InterPro" id="IPR023530">
    <property type="entry name" value="Cyt_B6_PetB"/>
</dbReference>
<dbReference type="InterPro" id="IPR027387">
    <property type="entry name" value="Cytb/b6-like_sf"/>
</dbReference>
<dbReference type="InterPro" id="IPR048259">
    <property type="entry name" value="Cytochrome_b_N_euk/bac"/>
</dbReference>
<dbReference type="InterPro" id="IPR016174">
    <property type="entry name" value="Di-haem_cyt_TM"/>
</dbReference>
<dbReference type="NCBIfam" id="NF002990">
    <property type="entry name" value="PRK03735.1"/>
    <property type="match status" value="1"/>
</dbReference>
<dbReference type="PANTHER" id="PTHR19271">
    <property type="entry name" value="CYTOCHROME B"/>
    <property type="match status" value="1"/>
</dbReference>
<dbReference type="PANTHER" id="PTHR19271:SF16">
    <property type="entry name" value="CYTOCHROME B"/>
    <property type="match status" value="1"/>
</dbReference>
<dbReference type="Pfam" id="PF00033">
    <property type="entry name" value="Cytochrome_B"/>
    <property type="match status" value="1"/>
</dbReference>
<dbReference type="PIRSF" id="PIRSF000032">
    <property type="entry name" value="Cytochrome_b6"/>
    <property type="match status" value="1"/>
</dbReference>
<dbReference type="SUPFAM" id="SSF81342">
    <property type="entry name" value="Transmembrane di-heme cytochromes"/>
    <property type="match status" value="1"/>
</dbReference>
<dbReference type="PROSITE" id="PS51002">
    <property type="entry name" value="CYTB_NTER"/>
    <property type="match status" value="1"/>
</dbReference>
<comment type="function">
    <text evidence="1">Component of the cytochrome b6-f complex, which mediates electron transfer between photosystem II (PSII) and photosystem I (PSI), cyclic electron flow around PSI, and state transitions.</text>
</comment>
<comment type="cofactor">
    <cofactor evidence="1">
        <name>heme b</name>
        <dbReference type="ChEBI" id="CHEBI:60344"/>
    </cofactor>
    <text evidence="1">Binds 2 heme b groups non-covalently with two histidine residues as axial ligands.</text>
</comment>
<comment type="cofactor">
    <cofactor evidence="1">
        <name>heme c</name>
        <dbReference type="ChEBI" id="CHEBI:61717"/>
    </cofactor>
    <text evidence="1">Binds one heme group covalently by a single cysteine link with no axial amino acid ligand. This heme was named heme ci.</text>
</comment>
<comment type="subunit">
    <text evidence="1">The 4 large subunits of the cytochrome b6-f complex are cytochrome b6, subunit IV (17 kDa polypeptide, PetD), cytochrome f and the Rieske protein, while the 4 small subunits are PetG, PetL, PetM and PetN. The complex functions as a dimer.</text>
</comment>
<comment type="subcellular location">
    <subcellularLocation>
        <location evidence="1">Plastid</location>
        <location evidence="1">Chloroplast thylakoid membrane</location>
        <topology evidence="1">Multi-pass membrane protein</topology>
    </subcellularLocation>
</comment>
<comment type="miscellaneous">
    <text evidence="1">Heme 1 (or BH or b566) is high-potential and absorbs at about 566 nm, and heme 2 (or BL or b562) is low-potential and absorbs at about 562 nm.</text>
</comment>
<comment type="similarity">
    <text evidence="1">Belongs to the cytochrome b family. PetB subfamily.</text>
</comment>
<protein>
    <recommendedName>
        <fullName evidence="1">Cytochrome b6</fullName>
    </recommendedName>
</protein>